<keyword id="KW-0021">Allosteric enzyme</keyword>
<keyword id="KW-0067">ATP-binding</keyword>
<keyword id="KW-0319">Glycerol metabolism</keyword>
<keyword id="KW-0418">Kinase</keyword>
<keyword id="KW-0479">Metal-binding</keyword>
<keyword id="KW-0547">Nucleotide-binding</keyword>
<keyword id="KW-0808">Transferase</keyword>
<keyword id="KW-0862">Zinc</keyword>
<dbReference type="EC" id="2.7.1.30" evidence="1"/>
<dbReference type="EMBL" id="CP001396">
    <property type="protein sequence ID" value="ACR63356.1"/>
    <property type="molecule type" value="Genomic_DNA"/>
</dbReference>
<dbReference type="RefSeq" id="WP_000136788.1">
    <property type="nucleotide sequence ID" value="NC_012759.1"/>
</dbReference>
<dbReference type="SMR" id="C5A093"/>
<dbReference type="GeneID" id="75169366"/>
<dbReference type="KEGG" id="ebw:BWG_3595"/>
<dbReference type="HOGENOM" id="CLU_009281_2_3_6"/>
<dbReference type="UniPathway" id="UPA00618">
    <property type="reaction ID" value="UER00672"/>
</dbReference>
<dbReference type="GO" id="GO:0005829">
    <property type="term" value="C:cytosol"/>
    <property type="evidence" value="ECO:0007669"/>
    <property type="project" value="TreeGrafter"/>
</dbReference>
<dbReference type="GO" id="GO:0005524">
    <property type="term" value="F:ATP binding"/>
    <property type="evidence" value="ECO:0007669"/>
    <property type="project" value="UniProtKB-UniRule"/>
</dbReference>
<dbReference type="GO" id="GO:0004370">
    <property type="term" value="F:glycerol kinase activity"/>
    <property type="evidence" value="ECO:0000250"/>
    <property type="project" value="UniProtKB"/>
</dbReference>
<dbReference type="GO" id="GO:0046872">
    <property type="term" value="F:metal ion binding"/>
    <property type="evidence" value="ECO:0007669"/>
    <property type="project" value="UniProtKB-KW"/>
</dbReference>
<dbReference type="GO" id="GO:0019563">
    <property type="term" value="P:glycerol catabolic process"/>
    <property type="evidence" value="ECO:0007669"/>
    <property type="project" value="UniProtKB-UniRule"/>
</dbReference>
<dbReference type="GO" id="GO:0006071">
    <property type="term" value="P:glycerol metabolic process"/>
    <property type="evidence" value="ECO:0000250"/>
    <property type="project" value="UniProtKB"/>
</dbReference>
<dbReference type="GO" id="GO:0006072">
    <property type="term" value="P:glycerol-3-phosphate metabolic process"/>
    <property type="evidence" value="ECO:0007669"/>
    <property type="project" value="InterPro"/>
</dbReference>
<dbReference type="CDD" id="cd07786">
    <property type="entry name" value="FGGY_EcGK_like"/>
    <property type="match status" value="1"/>
</dbReference>
<dbReference type="FunFam" id="3.30.420.40:FF:000007">
    <property type="entry name" value="Glycerol kinase"/>
    <property type="match status" value="1"/>
</dbReference>
<dbReference type="FunFam" id="3.30.420.40:FF:000008">
    <property type="entry name" value="Glycerol kinase"/>
    <property type="match status" value="1"/>
</dbReference>
<dbReference type="Gene3D" id="3.30.420.40">
    <property type="match status" value="2"/>
</dbReference>
<dbReference type="HAMAP" id="MF_00186">
    <property type="entry name" value="Glycerol_kin"/>
    <property type="match status" value="1"/>
</dbReference>
<dbReference type="InterPro" id="IPR043129">
    <property type="entry name" value="ATPase_NBD"/>
</dbReference>
<dbReference type="InterPro" id="IPR000577">
    <property type="entry name" value="Carb_kinase_FGGY"/>
</dbReference>
<dbReference type="InterPro" id="IPR018483">
    <property type="entry name" value="Carb_kinase_FGGY_CS"/>
</dbReference>
<dbReference type="InterPro" id="IPR018485">
    <property type="entry name" value="FGGY_C"/>
</dbReference>
<dbReference type="InterPro" id="IPR018484">
    <property type="entry name" value="FGGY_N"/>
</dbReference>
<dbReference type="InterPro" id="IPR005999">
    <property type="entry name" value="Glycerol_kin"/>
</dbReference>
<dbReference type="NCBIfam" id="TIGR01311">
    <property type="entry name" value="glycerol_kin"/>
    <property type="match status" value="1"/>
</dbReference>
<dbReference type="NCBIfam" id="NF000756">
    <property type="entry name" value="PRK00047.1"/>
    <property type="match status" value="1"/>
</dbReference>
<dbReference type="PANTHER" id="PTHR10196:SF69">
    <property type="entry name" value="GLYCEROL KINASE"/>
    <property type="match status" value="1"/>
</dbReference>
<dbReference type="PANTHER" id="PTHR10196">
    <property type="entry name" value="SUGAR KINASE"/>
    <property type="match status" value="1"/>
</dbReference>
<dbReference type="Pfam" id="PF02782">
    <property type="entry name" value="FGGY_C"/>
    <property type="match status" value="1"/>
</dbReference>
<dbReference type="Pfam" id="PF00370">
    <property type="entry name" value="FGGY_N"/>
    <property type="match status" value="1"/>
</dbReference>
<dbReference type="PIRSF" id="PIRSF000538">
    <property type="entry name" value="GlpK"/>
    <property type="match status" value="1"/>
</dbReference>
<dbReference type="SUPFAM" id="SSF53067">
    <property type="entry name" value="Actin-like ATPase domain"/>
    <property type="match status" value="2"/>
</dbReference>
<dbReference type="PROSITE" id="PS00933">
    <property type="entry name" value="FGGY_KINASES_1"/>
    <property type="match status" value="1"/>
</dbReference>
<dbReference type="PROSITE" id="PS00445">
    <property type="entry name" value="FGGY_KINASES_2"/>
    <property type="match status" value="1"/>
</dbReference>
<accession>C5A093</accession>
<sequence>MTEKKYIVALDQGTTSSRAVVMDHDANIISVSQREFEQIYPKPGWVEHDPMEIWATQSSTLVEVLAKADISSDQIAAIGITNQRETTIVWEKETGKPIYNAIVWQCRRTAEICEHLKRDGLEDYIRSNTGLVIDPYFSGTKVKWILDHVEGSRERARRGELLFGTVDTWLIWKMTQGRVHVTDYTNASRTMLFNIHTLDWDDKMLEVLDIPREMLPEVRRSSEVYGQTNIGGKGGTRIPISGIAGDQQAALFGQLCVKEGMAKNTYGTGCFMLMNTGEKAVKSENGLLTTIACGPTGEVNYALEGAVFMAGASIQWLRDEMKLINDAYDSEYFATKVQNTNGVYVVPAFTGLGAPYWDPYARGAIFGLTRGVNANHIIRATLESIAYQTRDVLEAMQADSGIRLHALRVDGGAVANNFLMQFQSDILGTRVERPEVREVTALGAAYLAGLAVGFWQNLDELQEKAVIEREFRPGIETTERNYRYAGWKKAVKRAMAWEEHDE</sequence>
<reference key="1">
    <citation type="journal article" date="2009" name="J. Bacteriol.">
        <title>Genomic sequencing reveals regulatory mutations and recombinational events in the widely used MC4100 lineage of Escherichia coli K-12.</title>
        <authorList>
            <person name="Ferenci T."/>
            <person name="Zhou Z."/>
            <person name="Betteridge T."/>
            <person name="Ren Y."/>
            <person name="Liu Y."/>
            <person name="Feng L."/>
            <person name="Reeves P.R."/>
            <person name="Wang L."/>
        </authorList>
    </citation>
    <scope>NUCLEOTIDE SEQUENCE [LARGE SCALE GENOMIC DNA]</scope>
    <source>
        <strain>K12 / MC4100 / BW2952</strain>
    </source>
</reference>
<proteinExistence type="inferred from homology"/>
<organism>
    <name type="scientific">Escherichia coli (strain K12 / MC4100 / BW2952)</name>
    <dbReference type="NCBI Taxonomy" id="595496"/>
    <lineage>
        <taxon>Bacteria</taxon>
        <taxon>Pseudomonadati</taxon>
        <taxon>Pseudomonadota</taxon>
        <taxon>Gammaproteobacteria</taxon>
        <taxon>Enterobacterales</taxon>
        <taxon>Enterobacteriaceae</taxon>
        <taxon>Escherichia</taxon>
    </lineage>
</organism>
<evidence type="ECO:0000255" key="1">
    <source>
        <dbReference type="HAMAP-Rule" id="MF_00186"/>
    </source>
</evidence>
<name>GLPK_ECOBW</name>
<gene>
    <name evidence="1" type="primary">glpK</name>
    <name type="ordered locus">BWG_3595</name>
</gene>
<protein>
    <recommendedName>
        <fullName evidence="1">Glycerol kinase</fullName>
        <ecNumber evidence="1">2.7.1.30</ecNumber>
    </recommendedName>
    <alternativeName>
        <fullName evidence="1">ATP:glycerol 3-phosphotransferase</fullName>
    </alternativeName>
    <alternativeName>
        <fullName evidence="1">Glycerokinase</fullName>
        <shortName evidence="1">GK</shortName>
    </alternativeName>
</protein>
<comment type="function">
    <text evidence="1">Key enzyme in the regulation of glycerol uptake and metabolism. Catalyzes the phosphorylation of glycerol to yield sn-glycerol 3-phosphate.</text>
</comment>
<comment type="catalytic activity">
    <reaction evidence="1">
        <text>glycerol + ATP = sn-glycerol 3-phosphate + ADP + H(+)</text>
        <dbReference type="Rhea" id="RHEA:21644"/>
        <dbReference type="ChEBI" id="CHEBI:15378"/>
        <dbReference type="ChEBI" id="CHEBI:17754"/>
        <dbReference type="ChEBI" id="CHEBI:30616"/>
        <dbReference type="ChEBI" id="CHEBI:57597"/>
        <dbReference type="ChEBI" id="CHEBI:456216"/>
        <dbReference type="EC" id="2.7.1.30"/>
    </reaction>
</comment>
<comment type="activity regulation">
    <text evidence="1">Activity of this regulatory enzyme is affected by several metabolites. Allosterically and non-competitively inhibited by fructose 1,6-bisphosphate (FBP) and unphosphorylated phosphocarrier protein EIIA-Glc (III-Glc), an integral component of the bacterial phosphotransferase (PTS) system.</text>
</comment>
<comment type="pathway">
    <text evidence="1">Polyol metabolism; glycerol degradation via glycerol kinase pathway; sn-glycerol 3-phosphate from glycerol: step 1/1.</text>
</comment>
<comment type="subunit">
    <text evidence="1">Homotetramer and homodimer (in equilibrium). Heterodimer with EIIA-Glc. Binds 1 zinc ion per glycerol kinase EIIA-Glc dimer. The zinc ion is important for dimerization.</text>
</comment>
<comment type="similarity">
    <text evidence="1">Belongs to the FGGY kinase family.</text>
</comment>
<feature type="chain" id="PRO_1000203952" description="Glycerol kinase">
    <location>
        <begin position="1"/>
        <end position="502"/>
    </location>
</feature>
<feature type="binding site" evidence="1">
    <location>
        <position position="14"/>
    </location>
    <ligand>
        <name>ADP</name>
        <dbReference type="ChEBI" id="CHEBI:456216"/>
    </ligand>
</feature>
<feature type="binding site" evidence="1">
    <location>
        <position position="14"/>
    </location>
    <ligand>
        <name>ATP</name>
        <dbReference type="ChEBI" id="CHEBI:30616"/>
    </ligand>
</feature>
<feature type="binding site" evidence="1">
    <location>
        <position position="14"/>
    </location>
    <ligand>
        <name>sn-glycerol 3-phosphate</name>
        <dbReference type="ChEBI" id="CHEBI:57597"/>
    </ligand>
</feature>
<feature type="binding site" evidence="1">
    <location>
        <position position="15"/>
    </location>
    <ligand>
        <name>ATP</name>
        <dbReference type="ChEBI" id="CHEBI:30616"/>
    </ligand>
</feature>
<feature type="binding site" evidence="1">
    <location>
        <position position="16"/>
    </location>
    <ligand>
        <name>ATP</name>
        <dbReference type="ChEBI" id="CHEBI:30616"/>
    </ligand>
</feature>
<feature type="binding site" evidence="1">
    <location>
        <position position="18"/>
    </location>
    <ligand>
        <name>ADP</name>
        <dbReference type="ChEBI" id="CHEBI:456216"/>
    </ligand>
</feature>
<feature type="binding site" evidence="1">
    <location>
        <position position="84"/>
    </location>
    <ligand>
        <name>glycerol</name>
        <dbReference type="ChEBI" id="CHEBI:17754"/>
    </ligand>
</feature>
<feature type="binding site" evidence="1">
    <location>
        <position position="84"/>
    </location>
    <ligand>
        <name>sn-glycerol 3-phosphate</name>
        <dbReference type="ChEBI" id="CHEBI:57597"/>
    </ligand>
</feature>
<feature type="binding site" evidence="1">
    <location>
        <position position="85"/>
    </location>
    <ligand>
        <name>glycerol</name>
        <dbReference type="ChEBI" id="CHEBI:17754"/>
    </ligand>
</feature>
<feature type="binding site" evidence="1">
    <location>
        <position position="85"/>
    </location>
    <ligand>
        <name>sn-glycerol 3-phosphate</name>
        <dbReference type="ChEBI" id="CHEBI:57597"/>
    </ligand>
</feature>
<feature type="binding site" evidence="1">
    <location>
        <position position="136"/>
    </location>
    <ligand>
        <name>glycerol</name>
        <dbReference type="ChEBI" id="CHEBI:17754"/>
    </ligand>
</feature>
<feature type="binding site" evidence="1">
    <location>
        <position position="136"/>
    </location>
    <ligand>
        <name>sn-glycerol 3-phosphate</name>
        <dbReference type="ChEBI" id="CHEBI:57597"/>
    </ligand>
</feature>
<feature type="binding site" evidence="1">
    <location>
        <position position="246"/>
    </location>
    <ligand>
        <name>glycerol</name>
        <dbReference type="ChEBI" id="CHEBI:17754"/>
    </ligand>
</feature>
<feature type="binding site" evidence="1">
    <location>
        <position position="246"/>
    </location>
    <ligand>
        <name>sn-glycerol 3-phosphate</name>
        <dbReference type="ChEBI" id="CHEBI:57597"/>
    </ligand>
</feature>
<feature type="binding site" evidence="1">
    <location>
        <position position="247"/>
    </location>
    <ligand>
        <name>glycerol</name>
        <dbReference type="ChEBI" id="CHEBI:17754"/>
    </ligand>
</feature>
<feature type="binding site" evidence="1">
    <location>
        <position position="268"/>
    </location>
    <ligand>
        <name>ADP</name>
        <dbReference type="ChEBI" id="CHEBI:456216"/>
    </ligand>
</feature>
<feature type="binding site" evidence="1">
    <location>
        <position position="268"/>
    </location>
    <ligand>
        <name>ATP</name>
        <dbReference type="ChEBI" id="CHEBI:30616"/>
    </ligand>
</feature>
<feature type="binding site" evidence="1">
    <location>
        <position position="311"/>
    </location>
    <ligand>
        <name>ADP</name>
        <dbReference type="ChEBI" id="CHEBI:456216"/>
    </ligand>
</feature>
<feature type="binding site" evidence="1">
    <location>
        <position position="311"/>
    </location>
    <ligand>
        <name>ATP</name>
        <dbReference type="ChEBI" id="CHEBI:30616"/>
    </ligand>
</feature>
<feature type="binding site" evidence="1">
    <location>
        <position position="315"/>
    </location>
    <ligand>
        <name>ATP</name>
        <dbReference type="ChEBI" id="CHEBI:30616"/>
    </ligand>
</feature>
<feature type="binding site" evidence="1">
    <location>
        <position position="412"/>
    </location>
    <ligand>
        <name>ADP</name>
        <dbReference type="ChEBI" id="CHEBI:456216"/>
    </ligand>
</feature>
<feature type="binding site" evidence="1">
    <location>
        <position position="412"/>
    </location>
    <ligand>
        <name>ATP</name>
        <dbReference type="ChEBI" id="CHEBI:30616"/>
    </ligand>
</feature>
<feature type="binding site" evidence="1">
    <location>
        <position position="416"/>
    </location>
    <ligand>
        <name>ADP</name>
        <dbReference type="ChEBI" id="CHEBI:456216"/>
    </ligand>
</feature>